<name>DNAK_METBF</name>
<dbReference type="EMBL" id="CP000099">
    <property type="protein sequence ID" value="AAZ72306.1"/>
    <property type="molecule type" value="Genomic_DNA"/>
</dbReference>
<dbReference type="SMR" id="Q465Y6"/>
<dbReference type="STRING" id="269797.Mbar_A3433"/>
<dbReference type="PaxDb" id="269797-Mbar_A3433"/>
<dbReference type="KEGG" id="mba:Mbar_A3433"/>
<dbReference type="eggNOG" id="arCOG03060">
    <property type="taxonomic scope" value="Archaea"/>
</dbReference>
<dbReference type="HOGENOM" id="CLU_005965_2_1_2"/>
<dbReference type="OrthoDB" id="9944at2157"/>
<dbReference type="GO" id="GO:0005524">
    <property type="term" value="F:ATP binding"/>
    <property type="evidence" value="ECO:0007669"/>
    <property type="project" value="UniProtKB-UniRule"/>
</dbReference>
<dbReference type="GO" id="GO:0140662">
    <property type="term" value="F:ATP-dependent protein folding chaperone"/>
    <property type="evidence" value="ECO:0007669"/>
    <property type="project" value="InterPro"/>
</dbReference>
<dbReference type="GO" id="GO:0051082">
    <property type="term" value="F:unfolded protein binding"/>
    <property type="evidence" value="ECO:0007669"/>
    <property type="project" value="InterPro"/>
</dbReference>
<dbReference type="CDD" id="cd10234">
    <property type="entry name" value="ASKHA_NBD_HSP70_DnaK-like"/>
    <property type="match status" value="1"/>
</dbReference>
<dbReference type="FunFam" id="2.60.34.10:FF:000014">
    <property type="entry name" value="Chaperone protein DnaK HSP70"/>
    <property type="match status" value="1"/>
</dbReference>
<dbReference type="FunFam" id="1.20.1270.10:FF:000001">
    <property type="entry name" value="Molecular chaperone DnaK"/>
    <property type="match status" value="1"/>
</dbReference>
<dbReference type="FunFam" id="3.30.420.40:FF:000071">
    <property type="entry name" value="Molecular chaperone DnaK"/>
    <property type="match status" value="1"/>
</dbReference>
<dbReference type="FunFam" id="3.90.640.10:FF:000003">
    <property type="entry name" value="Molecular chaperone DnaK"/>
    <property type="match status" value="1"/>
</dbReference>
<dbReference type="Gene3D" id="1.20.1270.10">
    <property type="match status" value="1"/>
</dbReference>
<dbReference type="Gene3D" id="3.30.420.40">
    <property type="match status" value="2"/>
</dbReference>
<dbReference type="Gene3D" id="3.90.640.10">
    <property type="entry name" value="Actin, Chain A, domain 4"/>
    <property type="match status" value="1"/>
</dbReference>
<dbReference type="Gene3D" id="2.60.34.10">
    <property type="entry name" value="Substrate Binding Domain Of DNAk, Chain A, domain 1"/>
    <property type="match status" value="1"/>
</dbReference>
<dbReference type="HAMAP" id="MF_00332">
    <property type="entry name" value="DnaK"/>
    <property type="match status" value="1"/>
</dbReference>
<dbReference type="InterPro" id="IPR043129">
    <property type="entry name" value="ATPase_NBD"/>
</dbReference>
<dbReference type="InterPro" id="IPR012725">
    <property type="entry name" value="Chaperone_DnaK"/>
</dbReference>
<dbReference type="InterPro" id="IPR018181">
    <property type="entry name" value="Heat_shock_70_CS"/>
</dbReference>
<dbReference type="InterPro" id="IPR029048">
    <property type="entry name" value="HSP70_C_sf"/>
</dbReference>
<dbReference type="InterPro" id="IPR029047">
    <property type="entry name" value="HSP70_peptide-bd_sf"/>
</dbReference>
<dbReference type="InterPro" id="IPR013126">
    <property type="entry name" value="Hsp_70_fam"/>
</dbReference>
<dbReference type="NCBIfam" id="NF001413">
    <property type="entry name" value="PRK00290.1"/>
    <property type="match status" value="1"/>
</dbReference>
<dbReference type="NCBIfam" id="TIGR02350">
    <property type="entry name" value="prok_dnaK"/>
    <property type="match status" value="1"/>
</dbReference>
<dbReference type="PANTHER" id="PTHR19375">
    <property type="entry name" value="HEAT SHOCK PROTEIN 70KDA"/>
    <property type="match status" value="1"/>
</dbReference>
<dbReference type="Pfam" id="PF00012">
    <property type="entry name" value="HSP70"/>
    <property type="match status" value="1"/>
</dbReference>
<dbReference type="PRINTS" id="PR00301">
    <property type="entry name" value="HEATSHOCK70"/>
</dbReference>
<dbReference type="SUPFAM" id="SSF53067">
    <property type="entry name" value="Actin-like ATPase domain"/>
    <property type="match status" value="2"/>
</dbReference>
<dbReference type="SUPFAM" id="SSF100934">
    <property type="entry name" value="Heat shock protein 70kD (HSP70), C-terminal subdomain"/>
    <property type="match status" value="1"/>
</dbReference>
<dbReference type="SUPFAM" id="SSF100920">
    <property type="entry name" value="Heat shock protein 70kD (HSP70), peptide-binding domain"/>
    <property type="match status" value="1"/>
</dbReference>
<dbReference type="PROSITE" id="PS00297">
    <property type="entry name" value="HSP70_1"/>
    <property type="match status" value="1"/>
</dbReference>
<dbReference type="PROSITE" id="PS00329">
    <property type="entry name" value="HSP70_2"/>
    <property type="match status" value="1"/>
</dbReference>
<dbReference type="PROSITE" id="PS01036">
    <property type="entry name" value="HSP70_3"/>
    <property type="match status" value="1"/>
</dbReference>
<organism>
    <name type="scientific">Methanosarcina barkeri (strain Fusaro / DSM 804)</name>
    <dbReference type="NCBI Taxonomy" id="269797"/>
    <lineage>
        <taxon>Archaea</taxon>
        <taxon>Methanobacteriati</taxon>
        <taxon>Methanobacteriota</taxon>
        <taxon>Stenosarchaea group</taxon>
        <taxon>Methanomicrobia</taxon>
        <taxon>Methanosarcinales</taxon>
        <taxon>Methanosarcinaceae</taxon>
        <taxon>Methanosarcina</taxon>
    </lineage>
</organism>
<reference key="1">
    <citation type="journal article" date="2006" name="J. Bacteriol.">
        <title>The Methanosarcina barkeri genome: comparative analysis with Methanosarcina acetivorans and Methanosarcina mazei reveals extensive rearrangement within methanosarcinal genomes.</title>
        <authorList>
            <person name="Maeder D.L."/>
            <person name="Anderson I."/>
            <person name="Brettin T.S."/>
            <person name="Bruce D.C."/>
            <person name="Gilna P."/>
            <person name="Han C.S."/>
            <person name="Lapidus A."/>
            <person name="Metcalf W.W."/>
            <person name="Saunders E."/>
            <person name="Tapia R."/>
            <person name="Sowers K.R."/>
        </authorList>
    </citation>
    <scope>NUCLEOTIDE SEQUENCE [LARGE SCALE GENOMIC DNA]</scope>
    <source>
        <strain>Fusaro / DSM 804</strain>
    </source>
</reference>
<feature type="chain" id="PRO_0000226035" description="Chaperone protein DnaK">
    <location>
        <begin position="1"/>
        <end position="620"/>
    </location>
</feature>
<feature type="region of interest" description="Disordered" evidence="2">
    <location>
        <begin position="577"/>
        <end position="620"/>
    </location>
</feature>
<feature type="compositionally biased region" description="Low complexity" evidence="2">
    <location>
        <begin position="578"/>
        <end position="590"/>
    </location>
</feature>
<feature type="compositionally biased region" description="Acidic residues" evidence="2">
    <location>
        <begin position="605"/>
        <end position="620"/>
    </location>
</feature>
<accession>Q465Y6</accession>
<comment type="function">
    <text evidence="1">Acts as a chaperone.</text>
</comment>
<comment type="similarity">
    <text evidence="1">Belongs to the heat shock protein 70 family.</text>
</comment>
<proteinExistence type="inferred from homology"/>
<sequence length="620" mass="66403">MAKILGIDLGTTNSCMAVMEGGEAVVIPNAEGARTTPSVVGFSKKGEKLVGQVAKRQAISNPENTVYSIKRHMGDANYTVTLQGTQYKPQEISAMILQKLKTDAEAYLGETIKQAVITVPAYFNDAQRQATKDAGAIAGLDVLRIINEPTSASLAYGLDKGDIEQKILVYDLGGGTFDVSILELGGGVFEVKSTSGDTRLGGDDFDQRIVNYLLAEFRKIEGIDLSKDKAVLQRLTDAAEKAKIELSGVASTNINLPFLTVGADGEPKHLDIDLTRAQFQKMTEDLLEKTLVSMRQALSDAKLTPNDLDKVILVGGATRMPAVVELVENFTGKKPYKNINPDEAVAIGAAIQAGVLGGEVKDVLLLDVTPLTLGIETLGGIATPLIPRNTTIPTKKSQVFSTAADNQPSVEIHVLQGERGVASENKTLGRFTLDGIPPAPRGIPQIEVTFDIDANGILHVGAKDLGTGKEQSISIQKPGGLSDDEIDRMVKDAELHAEEDKKRKEDVETRNNAEALINAAEKTLKEAGDAATEDQKSKVTAAIDDLKKALEGKDSEDIKSKTEALQEAVYPISTAMYQKAQQQAQQAQQAEGEAGSHDAQGPDETVVDADYEVVDDEKRK</sequence>
<keyword id="KW-0067">ATP-binding</keyword>
<keyword id="KW-0143">Chaperone</keyword>
<keyword id="KW-0547">Nucleotide-binding</keyword>
<gene>
    <name evidence="1" type="primary">dnaK</name>
    <name type="ordered locus">Mbar_A3433</name>
</gene>
<protein>
    <recommendedName>
        <fullName evidence="1">Chaperone protein DnaK</fullName>
    </recommendedName>
    <alternativeName>
        <fullName evidence="1">HSP70</fullName>
    </alternativeName>
    <alternativeName>
        <fullName evidence="1">Heat shock 70 kDa protein</fullName>
    </alternativeName>
    <alternativeName>
        <fullName evidence="1">Heat shock protein 70</fullName>
    </alternativeName>
</protein>
<evidence type="ECO:0000255" key="1">
    <source>
        <dbReference type="HAMAP-Rule" id="MF_00332"/>
    </source>
</evidence>
<evidence type="ECO:0000256" key="2">
    <source>
        <dbReference type="SAM" id="MobiDB-lite"/>
    </source>
</evidence>